<keyword id="KW-1185">Reference proteome</keyword>
<keyword id="KW-0687">Ribonucleoprotein</keyword>
<keyword id="KW-0689">Ribosomal protein</keyword>
<name>RS213_BURPS</name>
<evidence type="ECO:0000255" key="1">
    <source>
        <dbReference type="HAMAP-Rule" id="MF_00358"/>
    </source>
</evidence>
<evidence type="ECO:0000305" key="2"/>
<sequence length="70" mass="8579">MTIIRVKENEPFEVAMRRFKRTIEKNGLLTELRAREFYEKPTAERKRKKAAAVKRHYKRIRSQMLPKKLY</sequence>
<comment type="similarity">
    <text evidence="1">Belongs to the bacterial ribosomal protein bS21 family.</text>
</comment>
<reference key="1">
    <citation type="journal article" date="2004" name="Proc. Natl. Acad. Sci. U.S.A.">
        <title>Genomic plasticity of the causative agent of melioidosis, Burkholderia pseudomallei.</title>
        <authorList>
            <person name="Holden M.T.G."/>
            <person name="Titball R.W."/>
            <person name="Peacock S.J."/>
            <person name="Cerdeno-Tarraga A.-M."/>
            <person name="Atkins T."/>
            <person name="Crossman L.C."/>
            <person name="Pitt T."/>
            <person name="Churcher C."/>
            <person name="Mungall K.L."/>
            <person name="Bentley S.D."/>
            <person name="Sebaihia M."/>
            <person name="Thomson N.R."/>
            <person name="Bason N."/>
            <person name="Beacham I.R."/>
            <person name="Brooks K."/>
            <person name="Brown K.A."/>
            <person name="Brown N.F."/>
            <person name="Challis G.L."/>
            <person name="Cherevach I."/>
            <person name="Chillingworth T."/>
            <person name="Cronin A."/>
            <person name="Crossett B."/>
            <person name="Davis P."/>
            <person name="DeShazer D."/>
            <person name="Feltwell T."/>
            <person name="Fraser A."/>
            <person name="Hance Z."/>
            <person name="Hauser H."/>
            <person name="Holroyd S."/>
            <person name="Jagels K."/>
            <person name="Keith K.E."/>
            <person name="Maddison M."/>
            <person name="Moule S."/>
            <person name="Price C."/>
            <person name="Quail M.A."/>
            <person name="Rabbinowitsch E."/>
            <person name="Rutherford K."/>
            <person name="Sanders M."/>
            <person name="Simmonds M."/>
            <person name="Songsivilai S."/>
            <person name="Stevens K."/>
            <person name="Tumapa S."/>
            <person name="Vesaratchavest M."/>
            <person name="Whitehead S."/>
            <person name="Yeats C."/>
            <person name="Barrell B.G."/>
            <person name="Oyston P.C.F."/>
            <person name="Parkhill J."/>
        </authorList>
    </citation>
    <scope>NUCLEOTIDE SEQUENCE [LARGE SCALE GENOMIC DNA]</scope>
    <source>
        <strain>K96243</strain>
    </source>
</reference>
<accession>Q63JF8</accession>
<organism>
    <name type="scientific">Burkholderia pseudomallei (strain K96243)</name>
    <dbReference type="NCBI Taxonomy" id="272560"/>
    <lineage>
        <taxon>Bacteria</taxon>
        <taxon>Pseudomonadati</taxon>
        <taxon>Pseudomonadota</taxon>
        <taxon>Betaproteobacteria</taxon>
        <taxon>Burkholderiales</taxon>
        <taxon>Burkholderiaceae</taxon>
        <taxon>Burkholderia</taxon>
        <taxon>pseudomallei group</taxon>
    </lineage>
</organism>
<dbReference type="EMBL" id="BX571966">
    <property type="protein sequence ID" value="CAH39233.1"/>
    <property type="molecule type" value="Genomic_DNA"/>
</dbReference>
<dbReference type="RefSeq" id="YP_111764.1">
    <property type="nucleotide sequence ID" value="NC_006351.1"/>
</dbReference>
<dbReference type="SMR" id="Q63JF8"/>
<dbReference type="STRING" id="272560.BPSS1758"/>
<dbReference type="KEGG" id="bps:BPSS1758"/>
<dbReference type="PATRIC" id="fig|272560.51.peg.5189"/>
<dbReference type="eggNOG" id="COG0828">
    <property type="taxonomic scope" value="Bacteria"/>
</dbReference>
<dbReference type="PRO" id="PR:Q63JF8"/>
<dbReference type="Proteomes" id="UP000000605">
    <property type="component" value="Chromosome 2"/>
</dbReference>
<dbReference type="GO" id="GO:1990904">
    <property type="term" value="C:ribonucleoprotein complex"/>
    <property type="evidence" value="ECO:0007669"/>
    <property type="project" value="UniProtKB-KW"/>
</dbReference>
<dbReference type="GO" id="GO:0005840">
    <property type="term" value="C:ribosome"/>
    <property type="evidence" value="ECO:0007669"/>
    <property type="project" value="UniProtKB-KW"/>
</dbReference>
<dbReference type="GO" id="GO:0003735">
    <property type="term" value="F:structural constituent of ribosome"/>
    <property type="evidence" value="ECO:0007669"/>
    <property type="project" value="InterPro"/>
</dbReference>
<dbReference type="GO" id="GO:0006412">
    <property type="term" value="P:translation"/>
    <property type="evidence" value="ECO:0007669"/>
    <property type="project" value="UniProtKB-UniRule"/>
</dbReference>
<dbReference type="Gene3D" id="1.20.5.1150">
    <property type="entry name" value="Ribosomal protein S8"/>
    <property type="match status" value="1"/>
</dbReference>
<dbReference type="HAMAP" id="MF_00358">
    <property type="entry name" value="Ribosomal_bS21"/>
    <property type="match status" value="1"/>
</dbReference>
<dbReference type="InterPro" id="IPR001911">
    <property type="entry name" value="Ribosomal_bS21"/>
</dbReference>
<dbReference type="InterPro" id="IPR038380">
    <property type="entry name" value="Ribosomal_bS21_sf"/>
</dbReference>
<dbReference type="NCBIfam" id="TIGR00030">
    <property type="entry name" value="S21p"/>
    <property type="match status" value="1"/>
</dbReference>
<dbReference type="PANTHER" id="PTHR21109">
    <property type="entry name" value="MITOCHONDRIAL 28S RIBOSOMAL PROTEIN S21"/>
    <property type="match status" value="1"/>
</dbReference>
<dbReference type="PANTHER" id="PTHR21109:SF22">
    <property type="entry name" value="SMALL RIBOSOMAL SUBUNIT PROTEIN BS21"/>
    <property type="match status" value="1"/>
</dbReference>
<dbReference type="Pfam" id="PF01165">
    <property type="entry name" value="Ribosomal_S21"/>
    <property type="match status" value="1"/>
</dbReference>
<dbReference type="PRINTS" id="PR00976">
    <property type="entry name" value="RIBOSOMALS21"/>
</dbReference>
<gene>
    <name evidence="1" type="primary">rpsU3</name>
    <name type="ordered locus">BPSS1758</name>
</gene>
<proteinExistence type="inferred from homology"/>
<feature type="chain" id="PRO_0000266639" description="Small ribosomal subunit protein bS21C">
    <location>
        <begin position="1"/>
        <end position="70"/>
    </location>
</feature>
<protein>
    <recommendedName>
        <fullName evidence="1">Small ribosomal subunit protein bS21C</fullName>
    </recommendedName>
    <alternativeName>
        <fullName evidence="2">30S ribosomal protein S21 3</fullName>
    </alternativeName>
</protein>